<accession>P21756</accession>
<comment type="function">
    <text evidence="3">PLI binds directly phospholipase A2 in the presence or absence of calcium. Inhibitory activity of the PLI-B homotrimer is less specific than that of the PLI-A homotrimer.</text>
</comment>
<comment type="subunit">
    <text evidence="2">Homo- or heterotrimer; homotrimer of PLI-A chains, two PLI-A and one PLI-B chains, one PLI-A and two PLI-B chains, and homotrimer of PLI-B chains (with a ratio of 1:3:3:1).</text>
</comment>
<comment type="subcellular location">
    <subcellularLocation>
        <location evidence="3">Secreted</location>
    </subcellularLocation>
    <text evidence="3">Secreted in plasma.</text>
</comment>
<comment type="tissue specificity">
    <text>Expressed by the liver.</text>
</comment>
<comment type="similarity">
    <text evidence="4">Belongs to the alpha-type phospholipase A2 inhibitor family.</text>
</comment>
<keyword id="KW-0106">Calcium</keyword>
<keyword id="KW-0903">Direct protein sequencing</keyword>
<keyword id="KW-1015">Disulfide bond</keyword>
<keyword id="KW-0325">Glycoprotein</keyword>
<keyword id="KW-0430">Lectin</keyword>
<keyword id="KW-0593">Phospholipase A2 inhibitor</keyword>
<keyword id="KW-0964">Secreted</keyword>
<reference key="1">
    <citation type="journal article" date="1991" name="J. Biol. Chem.">
        <title>Amino acid sequences of the two subunits of a phospholipase A2 inhibitor from the blood plasma of Trimeresurus flavoviridis. Sequence homologies with pulmonary surfactant apoprotein and animal lectins.</title>
        <authorList>
            <person name="Inoue S."/>
            <person name="Kogaki H."/>
            <person name="Ikeda K."/>
            <person name="Samejima Y."/>
            <person name="Omori-Satoh T."/>
        </authorList>
    </citation>
    <scope>PROTEIN SEQUENCE</scope>
    <scope>FUNCTION</scope>
    <scope>SUBCELLULAR LOCATION</scope>
    <scope>DISULFIDE BOND</scope>
    <scope>GLYCOSYLATION AT ASN-103</scope>
    <source>
        <tissue>Blood</tissue>
    </source>
</reference>
<reference key="2">
    <citation type="journal article" date="2008" name="Toxicon">
        <title>Subunit structure and inhibition specificity of alpha-type phospholipase A2 inhibitor from Protobothrops flavoviridis.</title>
        <authorList>
            <person name="Shimada A."/>
            <person name="Ohkura N."/>
            <person name="Hayashi K."/>
            <person name="Samejima Y."/>
            <person name="Omori-Satoh T."/>
            <person name="Inoue S."/>
            <person name="Ikeda K."/>
        </authorList>
    </citation>
    <scope>SUBUNIT</scope>
</reference>
<dbReference type="PIR" id="B39091">
    <property type="entry name" value="B39091"/>
</dbReference>
<dbReference type="SMR" id="P21756"/>
<dbReference type="iPTMnet" id="P21756"/>
<dbReference type="GO" id="GO:0005576">
    <property type="term" value="C:extracellular region"/>
    <property type="evidence" value="ECO:0007669"/>
    <property type="project" value="UniProtKB-SubCell"/>
</dbReference>
<dbReference type="GO" id="GO:0030246">
    <property type="term" value="F:carbohydrate binding"/>
    <property type="evidence" value="ECO:0007669"/>
    <property type="project" value="UniProtKB-KW"/>
</dbReference>
<dbReference type="GO" id="GO:0019834">
    <property type="term" value="F:phospholipase A2 inhibitor activity"/>
    <property type="evidence" value="ECO:0007669"/>
    <property type="project" value="UniProtKB-KW"/>
</dbReference>
<dbReference type="Gene3D" id="3.10.100.10">
    <property type="entry name" value="Mannose-Binding Protein A, subunit A"/>
    <property type="match status" value="1"/>
</dbReference>
<dbReference type="InterPro" id="IPR001304">
    <property type="entry name" value="C-type_lectin-like"/>
</dbReference>
<dbReference type="InterPro" id="IPR016186">
    <property type="entry name" value="C-type_lectin-like/link_sf"/>
</dbReference>
<dbReference type="InterPro" id="IPR018378">
    <property type="entry name" value="C-type_lectin_CS"/>
</dbReference>
<dbReference type="InterPro" id="IPR016187">
    <property type="entry name" value="CTDL_fold"/>
</dbReference>
<dbReference type="Pfam" id="PF00059">
    <property type="entry name" value="Lectin_C"/>
    <property type="match status" value="1"/>
</dbReference>
<dbReference type="SUPFAM" id="SSF56436">
    <property type="entry name" value="C-type lectin-like"/>
    <property type="match status" value="1"/>
</dbReference>
<dbReference type="PROSITE" id="PS00615">
    <property type="entry name" value="C_TYPE_LECTIN_1"/>
    <property type="match status" value="1"/>
</dbReference>
<dbReference type="PROSITE" id="PS50041">
    <property type="entry name" value="C_TYPE_LECTIN_2"/>
    <property type="match status" value="1"/>
</dbReference>
<name>PLIAB_PROFL</name>
<sequence length="147" mass="16412">HETDSDGQVMNSMIEALTELQEMIVNLRYAFLTVHKARSFGSGSERLYVSNKEIKTFEPLKEICEEAGGHIPSPQLENQNKAFANVLERHNKAAYLVVGDSANFTNWAAGQPNEADGTCVKADTHGFWHSASCDEKLLVVCEFYFIL</sequence>
<evidence type="ECO:0000255" key="1">
    <source>
        <dbReference type="PROSITE-ProRule" id="PRU00040"/>
    </source>
</evidence>
<evidence type="ECO:0000269" key="2">
    <source>
    </source>
</evidence>
<evidence type="ECO:0000269" key="3">
    <source>
    </source>
</evidence>
<evidence type="ECO:0000305" key="4"/>
<proteinExistence type="evidence at protein level"/>
<protein>
    <recommendedName>
        <fullName>Phospholipase A2 inhibitor subunit B</fullName>
        <shortName>alpha-PLI B</shortName>
    </recommendedName>
</protein>
<organism>
    <name type="scientific">Protobothrops flavoviridis</name>
    <name type="common">Habu</name>
    <name type="synonym">Trimeresurus flavoviridis</name>
    <dbReference type="NCBI Taxonomy" id="88087"/>
    <lineage>
        <taxon>Eukaryota</taxon>
        <taxon>Metazoa</taxon>
        <taxon>Chordata</taxon>
        <taxon>Craniata</taxon>
        <taxon>Vertebrata</taxon>
        <taxon>Euteleostomi</taxon>
        <taxon>Lepidosauria</taxon>
        <taxon>Squamata</taxon>
        <taxon>Bifurcata</taxon>
        <taxon>Unidentata</taxon>
        <taxon>Episquamata</taxon>
        <taxon>Toxicofera</taxon>
        <taxon>Serpentes</taxon>
        <taxon>Colubroidea</taxon>
        <taxon>Viperidae</taxon>
        <taxon>Crotalinae</taxon>
        <taxon>Protobothrops</taxon>
    </lineage>
</organism>
<feature type="chain" id="PRO_0000046695" description="Phospholipase A2 inhibitor subunit B">
    <location>
        <begin position="1"/>
        <end position="147"/>
    </location>
</feature>
<feature type="domain" description="C-type lectin" evidence="1">
    <location>
        <begin position="62"/>
        <end position="143"/>
    </location>
</feature>
<feature type="glycosylation site" description="N-linked (GlcNAc...) asparagine" evidence="3">
    <location>
        <position position="103"/>
    </location>
</feature>
<feature type="disulfide bond" evidence="3">
    <location>
        <begin position="64"/>
        <end position="141"/>
    </location>
</feature>
<feature type="disulfide bond" evidence="3">
    <location>
        <begin position="119"/>
        <end position="133"/>
    </location>
</feature>